<proteinExistence type="inferred from homology"/>
<evidence type="ECO:0000250" key="1"/>
<evidence type="ECO:0000255" key="2"/>
<evidence type="ECO:0000256" key="3">
    <source>
        <dbReference type="SAM" id="MobiDB-lite"/>
    </source>
</evidence>
<evidence type="ECO:0000305" key="4"/>
<comment type="function">
    <text evidence="1">Water channel required to facilitate the transport of water across membranes. Involved in freeze tolerance, osmotolerance and cell flocculation in liquid cultures. Is non-functional in most laboratory strains (By similarity).</text>
</comment>
<comment type="subcellular location">
    <subcellularLocation>
        <location evidence="1">Endoplasmic reticulum membrane</location>
        <topology>Multi-pass membrane protein</topology>
    </subcellularLocation>
    <subcellularLocation>
        <location evidence="1">Cell membrane</location>
        <topology>Multi-pass membrane protein</topology>
    </subcellularLocation>
</comment>
<comment type="induction">
    <text evidence="1">During exponential phase in rich medium and repressed in minimum medium, hyper-osmolar medium or in sporulating conditions.</text>
</comment>
<comment type="domain">
    <text>Aquaporins contain two tandem repeats each containing three membrane-spanning domains and a pore-forming loop with the signature motif Asn-Pro-Ala (NPA).</text>
</comment>
<comment type="similarity">
    <text evidence="4">Belongs to the MIP/aquaporin (TC 1.A.8) family.</text>
</comment>
<comment type="caution">
    <text evidence="4">This is a truncated version of aquaporin-2. A natural 11 bp deletion in position 109 leads to a frameshift, which disrupts the gene coding for this protein and produces two ORFs EC1118_1L10_0111g and EC1118_1L10_0100g. A contiguous sequence for aquaporin-2 can be found in strain Sigma 1278B (AC P0CD89).</text>
</comment>
<dbReference type="EMBL" id="FN393078">
    <property type="protein sequence ID" value="CAY81189.1"/>
    <property type="molecule type" value="Genomic_DNA"/>
</dbReference>
<dbReference type="SMR" id="C8ZCS3"/>
<dbReference type="HOGENOM" id="CLU_1750738_0_0_1"/>
<dbReference type="OrthoDB" id="8581at4893"/>
<dbReference type="Proteomes" id="UP000000286">
    <property type="component" value="Chromosome XII, Scaffold EC1118_1L10"/>
</dbReference>
<dbReference type="GO" id="GO:0005789">
    <property type="term" value="C:endoplasmic reticulum membrane"/>
    <property type="evidence" value="ECO:0007669"/>
    <property type="project" value="UniProtKB-SubCell"/>
</dbReference>
<dbReference type="GO" id="GO:0005886">
    <property type="term" value="C:plasma membrane"/>
    <property type="evidence" value="ECO:0007669"/>
    <property type="project" value="UniProtKB-SubCell"/>
</dbReference>
<dbReference type="Gene3D" id="1.20.1080.10">
    <property type="entry name" value="Glycerol uptake facilitator protein"/>
    <property type="match status" value="1"/>
</dbReference>
<dbReference type="InterPro" id="IPR023271">
    <property type="entry name" value="Aquaporin-like"/>
</dbReference>
<dbReference type="SUPFAM" id="SSF81338">
    <property type="entry name" value="Aquaporin-like"/>
    <property type="match status" value="1"/>
</dbReference>
<name>AQY22_YEAS8</name>
<organism>
    <name type="scientific">Saccharomyces cerevisiae (strain Lalvin EC1118 / Prise de mousse)</name>
    <name type="common">Baker's yeast</name>
    <dbReference type="NCBI Taxonomy" id="643680"/>
    <lineage>
        <taxon>Eukaryota</taxon>
        <taxon>Fungi</taxon>
        <taxon>Dikarya</taxon>
        <taxon>Ascomycota</taxon>
        <taxon>Saccharomycotina</taxon>
        <taxon>Saccharomycetes</taxon>
        <taxon>Saccharomycetales</taxon>
        <taxon>Saccharomycetaceae</taxon>
        <taxon>Saccharomyces</taxon>
    </lineage>
</organism>
<keyword id="KW-1003">Cell membrane</keyword>
<keyword id="KW-0256">Endoplasmic reticulum</keyword>
<keyword id="KW-0472">Membrane</keyword>
<keyword id="KW-0677">Repeat</keyword>
<keyword id="KW-0812">Transmembrane</keyword>
<keyword id="KW-1133">Transmembrane helix</keyword>
<keyword id="KW-0813">Transport</keyword>
<reference key="1">
    <citation type="journal article" date="2009" name="Proc. Natl. Acad. Sci. U.S.A.">
        <title>Eukaryote-to-eukaryote gene transfer events revealed by the genome sequence of the wine yeast Saccharomyces cerevisiae EC1118.</title>
        <authorList>
            <person name="Novo M."/>
            <person name="Bigey F."/>
            <person name="Beyne E."/>
            <person name="Galeote V."/>
            <person name="Gavory F."/>
            <person name="Mallet S."/>
            <person name="Cambon B."/>
            <person name="Legras J.-L."/>
            <person name="Wincker P."/>
            <person name="Casaregola S."/>
            <person name="Dequin S."/>
        </authorList>
    </citation>
    <scope>NUCLEOTIDE SEQUENCE [LARGE SCALE GENOMIC DNA]</scope>
    <source>
        <strain>Lalvin EC1118 / Prise de mousse</strain>
    </source>
</reference>
<sequence length="149" mass="16966">MSNESNDLEKNISHLDPTGVDNAYIPPEQPETKHSRFNIDRGTLRNHFIAAVGEFCGTFMFLWCAYVICNVANHDVALTTEPEGSHPGQLIMIALGFGFSVMFSIWCFWWGFEPSRFSLFVFGQSHLTSQMCSDVVSSDHCWDGCWWCR</sequence>
<gene>
    <name type="primary">AQY2-2</name>
    <name type="ORF">EC1118_1L10_0111g</name>
</gene>
<protein>
    <recommendedName>
        <fullName>Aquaporin-like protein 2</fullName>
    </recommendedName>
    <alternativeName>
        <fullName>Truncated aquaporin-2</fullName>
    </alternativeName>
</protein>
<accession>C8ZCS3</accession>
<feature type="chain" id="PRO_0000391655" description="Aquaporin-like protein 2">
    <location>
        <begin position="1"/>
        <end position="149"/>
    </location>
</feature>
<feature type="topological domain" description="Cytoplasmic" evidence="1">
    <location>
        <begin position="1"/>
        <end position="47"/>
    </location>
</feature>
<feature type="transmembrane region" description="Helical" evidence="2">
    <location>
        <begin position="48"/>
        <end position="68"/>
    </location>
</feature>
<feature type="topological domain" description="Extracellular" evidence="1">
    <location>
        <begin position="69"/>
        <end position="89"/>
    </location>
</feature>
<feature type="transmembrane region" description="Helical" evidence="2">
    <location>
        <begin position="90"/>
        <end position="110"/>
    </location>
</feature>
<feature type="topological domain" description="Cytoplasmic" evidence="1">
    <location>
        <begin position="111"/>
        <end position="149"/>
    </location>
</feature>
<feature type="region of interest" description="Disordered" evidence="3">
    <location>
        <begin position="1"/>
        <end position="35"/>
    </location>
</feature>